<protein>
    <recommendedName>
        <fullName evidence="2">Small ribosomal subunit protein uS12</fullName>
    </recommendedName>
    <alternativeName>
        <fullName evidence="3">30S ribosomal protein S12</fullName>
    </alternativeName>
</protein>
<reference key="1">
    <citation type="submission" date="2008-07" db="EMBL/GenBank/DDBJ databases">
        <title>Complete sequence of Geobacter bemidjiensis BEM.</title>
        <authorList>
            <consortium name="US DOE Joint Genome Institute"/>
            <person name="Lucas S."/>
            <person name="Copeland A."/>
            <person name="Lapidus A."/>
            <person name="Glavina del Rio T."/>
            <person name="Dalin E."/>
            <person name="Tice H."/>
            <person name="Bruce D."/>
            <person name="Goodwin L."/>
            <person name="Pitluck S."/>
            <person name="Kiss H."/>
            <person name="Brettin T."/>
            <person name="Detter J.C."/>
            <person name="Han C."/>
            <person name="Kuske C.R."/>
            <person name="Schmutz J."/>
            <person name="Larimer F."/>
            <person name="Land M."/>
            <person name="Hauser L."/>
            <person name="Kyrpides N."/>
            <person name="Lykidis A."/>
            <person name="Lovley D."/>
            <person name="Richardson P."/>
        </authorList>
    </citation>
    <scope>NUCLEOTIDE SEQUENCE [LARGE SCALE GENOMIC DNA]</scope>
    <source>
        <strain>ATCC BAA-1014 / DSM 16622 / JCM 12645 / Bem</strain>
    </source>
</reference>
<dbReference type="EMBL" id="CP001124">
    <property type="protein sequence ID" value="ACH37949.1"/>
    <property type="molecule type" value="Genomic_DNA"/>
</dbReference>
<dbReference type="RefSeq" id="WP_012529361.1">
    <property type="nucleotide sequence ID" value="NC_011146.1"/>
</dbReference>
<dbReference type="SMR" id="B5EFP5"/>
<dbReference type="STRING" id="404380.Gbem_0928"/>
<dbReference type="KEGG" id="gbm:Gbem_0928"/>
<dbReference type="eggNOG" id="COG0048">
    <property type="taxonomic scope" value="Bacteria"/>
</dbReference>
<dbReference type="HOGENOM" id="CLU_104295_1_2_7"/>
<dbReference type="OrthoDB" id="9802366at2"/>
<dbReference type="Proteomes" id="UP000008825">
    <property type="component" value="Chromosome"/>
</dbReference>
<dbReference type="GO" id="GO:0015935">
    <property type="term" value="C:small ribosomal subunit"/>
    <property type="evidence" value="ECO:0007669"/>
    <property type="project" value="InterPro"/>
</dbReference>
<dbReference type="GO" id="GO:0019843">
    <property type="term" value="F:rRNA binding"/>
    <property type="evidence" value="ECO:0007669"/>
    <property type="project" value="UniProtKB-UniRule"/>
</dbReference>
<dbReference type="GO" id="GO:0003735">
    <property type="term" value="F:structural constituent of ribosome"/>
    <property type="evidence" value="ECO:0007669"/>
    <property type="project" value="InterPro"/>
</dbReference>
<dbReference type="GO" id="GO:0000049">
    <property type="term" value="F:tRNA binding"/>
    <property type="evidence" value="ECO:0007669"/>
    <property type="project" value="UniProtKB-UniRule"/>
</dbReference>
<dbReference type="GO" id="GO:0006412">
    <property type="term" value="P:translation"/>
    <property type="evidence" value="ECO:0007669"/>
    <property type="project" value="UniProtKB-UniRule"/>
</dbReference>
<dbReference type="CDD" id="cd03368">
    <property type="entry name" value="Ribosomal_S12"/>
    <property type="match status" value="1"/>
</dbReference>
<dbReference type="FunFam" id="2.40.50.140:FF:000001">
    <property type="entry name" value="30S ribosomal protein S12"/>
    <property type="match status" value="1"/>
</dbReference>
<dbReference type="Gene3D" id="2.40.50.140">
    <property type="entry name" value="Nucleic acid-binding proteins"/>
    <property type="match status" value="1"/>
</dbReference>
<dbReference type="HAMAP" id="MF_00403_B">
    <property type="entry name" value="Ribosomal_uS12_B"/>
    <property type="match status" value="1"/>
</dbReference>
<dbReference type="InterPro" id="IPR012340">
    <property type="entry name" value="NA-bd_OB-fold"/>
</dbReference>
<dbReference type="InterPro" id="IPR006032">
    <property type="entry name" value="Ribosomal_uS12"/>
</dbReference>
<dbReference type="InterPro" id="IPR005679">
    <property type="entry name" value="Ribosomal_uS12_bac"/>
</dbReference>
<dbReference type="NCBIfam" id="TIGR00981">
    <property type="entry name" value="rpsL_bact"/>
    <property type="match status" value="1"/>
</dbReference>
<dbReference type="PANTHER" id="PTHR11652">
    <property type="entry name" value="30S RIBOSOMAL PROTEIN S12 FAMILY MEMBER"/>
    <property type="match status" value="1"/>
</dbReference>
<dbReference type="Pfam" id="PF00164">
    <property type="entry name" value="Ribosom_S12_S23"/>
    <property type="match status" value="1"/>
</dbReference>
<dbReference type="PIRSF" id="PIRSF002133">
    <property type="entry name" value="Ribosomal_S12/S23"/>
    <property type="match status" value="1"/>
</dbReference>
<dbReference type="PRINTS" id="PR01034">
    <property type="entry name" value="RIBOSOMALS12"/>
</dbReference>
<dbReference type="SUPFAM" id="SSF50249">
    <property type="entry name" value="Nucleic acid-binding proteins"/>
    <property type="match status" value="1"/>
</dbReference>
<dbReference type="PROSITE" id="PS00055">
    <property type="entry name" value="RIBOSOMAL_S12"/>
    <property type="match status" value="1"/>
</dbReference>
<gene>
    <name evidence="2" type="primary">rpsL</name>
    <name type="ordered locus">Gbem_0928</name>
</gene>
<organism>
    <name type="scientific">Citrifermentans bemidjiense (strain ATCC BAA-1014 / DSM 16622 / JCM 12645 / Bem)</name>
    <name type="common">Geobacter bemidjiensis</name>
    <dbReference type="NCBI Taxonomy" id="404380"/>
    <lineage>
        <taxon>Bacteria</taxon>
        <taxon>Pseudomonadati</taxon>
        <taxon>Thermodesulfobacteriota</taxon>
        <taxon>Desulfuromonadia</taxon>
        <taxon>Geobacterales</taxon>
        <taxon>Geobacteraceae</taxon>
        <taxon>Citrifermentans</taxon>
    </lineage>
</organism>
<proteinExistence type="inferred from homology"/>
<comment type="function">
    <text evidence="2">With S4 and S5 plays an important role in translational accuracy.</text>
</comment>
<comment type="function">
    <text evidence="2">Interacts with and stabilizes bases of the 16S rRNA that are involved in tRNA selection in the A site and with the mRNA backbone. Located at the interface of the 30S and 50S subunits, it traverses the body of the 30S subunit contacting proteins on the other side and probably holding the rRNA structure together. The combined cluster of proteins S8, S12 and S17 appears to hold together the shoulder and platform of the 30S subunit.</text>
</comment>
<comment type="subunit">
    <text evidence="2">Part of the 30S ribosomal subunit. Contacts proteins S8 and S17. May interact with IF1 in the 30S initiation complex.</text>
</comment>
<comment type="similarity">
    <text evidence="2">Belongs to the universal ribosomal protein uS12 family.</text>
</comment>
<feature type="chain" id="PRO_1000194173" description="Small ribosomal subunit protein uS12">
    <location>
        <begin position="1"/>
        <end position="123"/>
    </location>
</feature>
<feature type="modified residue" description="3-methylthioaspartic acid" evidence="1">
    <location>
        <position position="89"/>
    </location>
</feature>
<keyword id="KW-0488">Methylation</keyword>
<keyword id="KW-1185">Reference proteome</keyword>
<keyword id="KW-0687">Ribonucleoprotein</keyword>
<keyword id="KW-0689">Ribosomal protein</keyword>
<keyword id="KW-0694">RNA-binding</keyword>
<keyword id="KW-0699">rRNA-binding</keyword>
<keyword id="KW-0820">tRNA-binding</keyword>
<accession>B5EFP5</accession>
<sequence>MPTINQLIRHGRESKGDKSTAPALRSCPQKRGVCTRVYTTTPKKPNSALRKVARVRLTNGVEVTSYIPGVGHNLQEHSVVLIRGGRVKDLPGVRYHIVRGTLDSVGVKGRMKSRSKYGAKRPK</sequence>
<evidence type="ECO:0000250" key="1"/>
<evidence type="ECO:0000255" key="2">
    <source>
        <dbReference type="HAMAP-Rule" id="MF_00403"/>
    </source>
</evidence>
<evidence type="ECO:0000305" key="3"/>
<name>RS12_CITBB</name>